<evidence type="ECO:0000250" key="1"/>
<evidence type="ECO:0000305" key="2"/>
<sequence length="91" mass="10553">MKKQESIHTQLPGENVNTGFTASQIYYSTYQVSKLTSHLELHPRDYSSQIGLWKLLGRRKRLLAYLFKKNTGLYERVLTKLGIRGLKVKGR</sequence>
<organism>
    <name type="scientific">Adiantum capillus-veneris</name>
    <name type="common">Maidenhair fern</name>
    <dbReference type="NCBI Taxonomy" id="13818"/>
    <lineage>
        <taxon>Eukaryota</taxon>
        <taxon>Viridiplantae</taxon>
        <taxon>Streptophyta</taxon>
        <taxon>Embryophyta</taxon>
        <taxon>Tracheophyta</taxon>
        <taxon>Polypodiopsida</taxon>
        <taxon>Polypodiidae</taxon>
        <taxon>Polypodiales</taxon>
        <taxon>Pteridineae</taxon>
        <taxon>Pteridaceae</taxon>
        <taxon>Vittarioideae</taxon>
        <taxon>Adiantum</taxon>
    </lineage>
</organism>
<name>RR15_ADICA</name>
<reference key="1">
    <citation type="journal article" date="2003" name="DNA Res.">
        <title>Complete nucleotide sequence of the chloroplast genome from a leptosporangiate fern, Adiantum capillus-veneris L.</title>
        <authorList>
            <person name="Wolf P.G."/>
            <person name="Rowe C.A."/>
            <person name="Sinclair R.B."/>
            <person name="Hasebe M."/>
        </authorList>
    </citation>
    <scope>NUCLEOTIDE SEQUENCE [LARGE SCALE GENOMIC DNA]</scope>
</reference>
<reference key="2">
    <citation type="journal article" date="2004" name="Gene">
        <title>High levels of RNA editing in a vascular plant chloroplast genome: analysis of transcripts from the fern Adiantum capillus-veneris.</title>
        <authorList>
            <person name="Wolf P.G."/>
            <person name="Rowe C.A."/>
            <person name="Hasebe M."/>
        </authorList>
    </citation>
    <scope>NUCLEOTIDE SEQUENCE [GENOMIC DNA]</scope>
    <scope>ABSENCE OF RNA EDITING</scope>
    <source>
        <tissue>Frond</tissue>
    </source>
</reference>
<geneLocation type="chloroplast"/>
<comment type="subunit">
    <text evidence="1">Part of the 30S ribosomal subunit.</text>
</comment>
<comment type="subcellular location">
    <subcellularLocation>
        <location>Plastid</location>
        <location>Chloroplast</location>
    </subcellularLocation>
</comment>
<comment type="similarity">
    <text evidence="2">Belongs to the universal ribosomal protein uS15 family.</text>
</comment>
<accession>Q85FG8</accession>
<feature type="chain" id="PRO_0000115626" description="Small ribosomal subunit protein uS15c">
    <location>
        <begin position="1"/>
        <end position="91"/>
    </location>
</feature>
<dbReference type="EMBL" id="AY178864">
    <property type="protein sequence ID" value="AAP29448.1"/>
    <property type="molecule type" value="Genomic_DNA"/>
</dbReference>
<dbReference type="RefSeq" id="NP_848117.1">
    <property type="nucleotide sequence ID" value="NC_004766.1"/>
</dbReference>
<dbReference type="SMR" id="Q85FG8"/>
<dbReference type="GeneID" id="807450"/>
<dbReference type="GO" id="GO:0009507">
    <property type="term" value="C:chloroplast"/>
    <property type="evidence" value="ECO:0007669"/>
    <property type="project" value="UniProtKB-SubCell"/>
</dbReference>
<dbReference type="GO" id="GO:1990904">
    <property type="term" value="C:ribonucleoprotein complex"/>
    <property type="evidence" value="ECO:0007669"/>
    <property type="project" value="UniProtKB-KW"/>
</dbReference>
<dbReference type="GO" id="GO:0005840">
    <property type="term" value="C:ribosome"/>
    <property type="evidence" value="ECO:0007669"/>
    <property type="project" value="UniProtKB-KW"/>
</dbReference>
<dbReference type="GO" id="GO:0003735">
    <property type="term" value="F:structural constituent of ribosome"/>
    <property type="evidence" value="ECO:0007669"/>
    <property type="project" value="InterPro"/>
</dbReference>
<dbReference type="GO" id="GO:0006412">
    <property type="term" value="P:translation"/>
    <property type="evidence" value="ECO:0007669"/>
    <property type="project" value="UniProtKB-UniRule"/>
</dbReference>
<dbReference type="CDD" id="cd00677">
    <property type="entry name" value="S15_NS1_EPRS_RNA-bind"/>
    <property type="match status" value="1"/>
</dbReference>
<dbReference type="Gene3D" id="1.10.287.10">
    <property type="entry name" value="S15/NS1, RNA-binding"/>
    <property type="match status" value="1"/>
</dbReference>
<dbReference type="HAMAP" id="MF_01343_B">
    <property type="entry name" value="Ribosomal_uS15_B"/>
    <property type="match status" value="1"/>
</dbReference>
<dbReference type="InterPro" id="IPR000589">
    <property type="entry name" value="Ribosomal_uS15"/>
</dbReference>
<dbReference type="InterPro" id="IPR005290">
    <property type="entry name" value="Ribosomal_uS15_bac-type"/>
</dbReference>
<dbReference type="InterPro" id="IPR009068">
    <property type="entry name" value="uS15_NS1_RNA-bd_sf"/>
</dbReference>
<dbReference type="NCBIfam" id="TIGR00952">
    <property type="entry name" value="S15_bact"/>
    <property type="match status" value="1"/>
</dbReference>
<dbReference type="PANTHER" id="PTHR23321">
    <property type="entry name" value="RIBOSOMAL PROTEIN S15, BACTERIAL AND ORGANELLAR"/>
    <property type="match status" value="1"/>
</dbReference>
<dbReference type="PANTHER" id="PTHR23321:SF26">
    <property type="entry name" value="SMALL RIBOSOMAL SUBUNIT PROTEIN US15M"/>
    <property type="match status" value="1"/>
</dbReference>
<dbReference type="Pfam" id="PF00312">
    <property type="entry name" value="Ribosomal_S15"/>
    <property type="match status" value="1"/>
</dbReference>
<dbReference type="SMART" id="SM01387">
    <property type="entry name" value="Ribosomal_S15"/>
    <property type="match status" value="1"/>
</dbReference>
<dbReference type="SUPFAM" id="SSF47060">
    <property type="entry name" value="S15/NS1 RNA-binding domain"/>
    <property type="match status" value="1"/>
</dbReference>
<dbReference type="PROSITE" id="PS00362">
    <property type="entry name" value="RIBOSOMAL_S15"/>
    <property type="match status" value="1"/>
</dbReference>
<keyword id="KW-0150">Chloroplast</keyword>
<keyword id="KW-0934">Plastid</keyword>
<keyword id="KW-0687">Ribonucleoprotein</keyword>
<keyword id="KW-0689">Ribosomal protein</keyword>
<protein>
    <recommendedName>
        <fullName evidence="2">Small ribosomal subunit protein uS15c</fullName>
    </recommendedName>
    <alternativeName>
        <fullName>30S ribosomal protein S15, chloroplastic</fullName>
    </alternativeName>
</protein>
<proteinExistence type="evidence at transcript level"/>
<gene>
    <name type="primary">rps15</name>
</gene>